<organism>
    <name type="scientific">Influenza A virus (strain A/Camel/Mongolia/1982 H1N1)</name>
    <dbReference type="NCBI Taxonomy" id="387191"/>
    <lineage>
        <taxon>Viruses</taxon>
        <taxon>Riboviria</taxon>
        <taxon>Orthornavirae</taxon>
        <taxon>Negarnaviricota</taxon>
        <taxon>Polyploviricotina</taxon>
        <taxon>Insthoviricetes</taxon>
        <taxon>Articulavirales</taxon>
        <taxon>Orthomyxoviridae</taxon>
        <taxon>Alphainfluenzavirus</taxon>
        <taxon>Alphainfluenzavirus influenzae</taxon>
        <taxon>Influenza A virus</taxon>
    </lineage>
</organism>
<name>RDRP_I82A2</name>
<keyword id="KW-0002">3D-structure</keyword>
<keyword id="KW-1262">Eukaryotic host gene expression shutoff by virus</keyword>
<keyword id="KW-1191">Eukaryotic host transcription shutoff by virus</keyword>
<keyword id="KW-1035">Host cytoplasm</keyword>
<keyword id="KW-1190">Host gene expression shutoff by virus</keyword>
<keyword id="KW-1048">Host nucleus</keyword>
<keyword id="KW-0945">Host-virus interaction</keyword>
<keyword id="KW-1104">Inhibition of host RNA polymerase II by virus</keyword>
<keyword id="KW-0547">Nucleotide-binding</keyword>
<keyword id="KW-0548">Nucleotidyltransferase</keyword>
<keyword id="KW-0597">Phosphoprotein</keyword>
<keyword id="KW-0696">RNA-directed RNA polymerase</keyword>
<keyword id="KW-0808">Transferase</keyword>
<keyword id="KW-0693">Viral RNA replication</keyword>
<keyword id="KW-1195">Viral transcription</keyword>
<feature type="chain" id="PRO_0000078746" description="RNA-directed RNA polymerase catalytic subunit">
    <location>
        <begin position="1" status="less than"/>
        <end position="161"/>
    </location>
</feature>
<feature type="non-terminal residue">
    <location>
        <position position="1"/>
    </location>
</feature>
<sequence length="161" mass="18834">NLYNIRNLHIPEVCLKWELMDEDYQGRLCNPLNPFVSHKEIESVNNAVMMPAHGPAKNMEYDAVATTHSWVPKRNRSILNTSQRGILEDEQMYQRCCNLFEKFFPSSSYRRPVGISSMVEAMVSRARIDARIDFESGRIKKEEFTEIMKTCSTIEELRRQK</sequence>
<reference key="1">
    <citation type="journal article" date="1993" name="Virology">
        <title>A reassortant H1N1 influenza A virus caused fatal epizootics among camels in Mongolia.</title>
        <authorList>
            <person name="Yamnikova S.S."/>
            <person name="Mandler J."/>
            <person name="Bekh-Ochir Z.H."/>
            <person name="Dachtzeren P."/>
            <person name="Ludwig S."/>
            <person name="Lvov D.K."/>
            <person name="Scholtissek C."/>
        </authorList>
    </citation>
    <scope>NUCLEOTIDE SEQUENCE [MRNA]</scope>
</reference>
<organismHost>
    <name type="scientific">Aves</name>
    <dbReference type="NCBI Taxonomy" id="8782"/>
</organismHost>
<organismHost>
    <name type="scientific">Homo sapiens</name>
    <name type="common">Human</name>
    <dbReference type="NCBI Taxonomy" id="9606"/>
</organismHost>
<organismHost>
    <name type="scientific">Sus scrofa</name>
    <name type="common">Pig</name>
    <dbReference type="NCBI Taxonomy" id="9823"/>
</organismHost>
<dbReference type="EC" id="2.7.7.48"/>
<dbReference type="EMBL" id="M73973">
    <property type="protein sequence ID" value="AAA16910.1"/>
    <property type="molecule type" value="mRNA"/>
</dbReference>
<dbReference type="PDB" id="1WBZ">
    <property type="method" value="X-ray"/>
    <property type="resolution" value="2.00 A"/>
    <property type="chains" value="P/Q=107-115"/>
</dbReference>
<dbReference type="PDBsum" id="1WBZ"/>
<dbReference type="SMR" id="P26144"/>
<dbReference type="EvolutionaryTrace" id="P26144"/>
<dbReference type="GO" id="GO:0030430">
    <property type="term" value="C:host cell cytoplasm"/>
    <property type="evidence" value="ECO:0007669"/>
    <property type="project" value="UniProtKB-SubCell"/>
</dbReference>
<dbReference type="GO" id="GO:0042025">
    <property type="term" value="C:host cell nucleus"/>
    <property type="evidence" value="ECO:0007669"/>
    <property type="project" value="UniProtKB-SubCell"/>
</dbReference>
<dbReference type="GO" id="GO:0000166">
    <property type="term" value="F:nucleotide binding"/>
    <property type="evidence" value="ECO:0007669"/>
    <property type="project" value="UniProtKB-KW"/>
</dbReference>
<dbReference type="GO" id="GO:0003723">
    <property type="term" value="F:RNA binding"/>
    <property type="evidence" value="ECO:0007669"/>
    <property type="project" value="InterPro"/>
</dbReference>
<dbReference type="GO" id="GO:0003968">
    <property type="term" value="F:RNA-directed RNA polymerase activity"/>
    <property type="evidence" value="ECO:0007669"/>
    <property type="project" value="UniProtKB-KW"/>
</dbReference>
<dbReference type="GO" id="GO:0039657">
    <property type="term" value="P:symbiont-mediated suppression of host gene expression"/>
    <property type="evidence" value="ECO:0007669"/>
    <property type="project" value="UniProtKB-KW"/>
</dbReference>
<dbReference type="GO" id="GO:0039523">
    <property type="term" value="P:symbiont-mediated suppression of host mRNA transcription via inhibition of RNA polymerase II activity"/>
    <property type="evidence" value="ECO:0007669"/>
    <property type="project" value="UniProtKB-KW"/>
</dbReference>
<dbReference type="GO" id="GO:0039694">
    <property type="term" value="P:viral RNA genome replication"/>
    <property type="evidence" value="ECO:0007669"/>
    <property type="project" value="InterPro"/>
</dbReference>
<dbReference type="GO" id="GO:0019083">
    <property type="term" value="P:viral transcription"/>
    <property type="evidence" value="ECO:0007669"/>
    <property type="project" value="UniProtKB-KW"/>
</dbReference>
<dbReference type="Gene3D" id="6.10.140.720">
    <property type="match status" value="1"/>
</dbReference>
<dbReference type="InterPro" id="IPR001407">
    <property type="entry name" value="RNA_pol_PB1_influenza"/>
</dbReference>
<dbReference type="Pfam" id="PF00602">
    <property type="entry name" value="Flu_PB1"/>
    <property type="match status" value="1"/>
</dbReference>
<accession>P26144</accession>
<gene>
    <name type="primary">PB1</name>
</gene>
<comment type="function">
    <text evidence="1">RNA-dependent RNA polymerase which is responsible for replication and transcription of virus RNA segments. The transcription of viral mRNAs occurs by a unique mechanism called cap-snatching. 5' methylated caps of cellular mRNAs are cleaved after 10-13 nucleotides by PA. In turn, these short capped RNAs are used as primers by PB1 for transcription of viral mRNAs. During virus replication, PB1 initiates RNA synthesis and copy vRNA into complementary RNA (cRNA) which in turn serves as a template for the production of more vRNAs.</text>
</comment>
<comment type="catalytic activity">
    <reaction evidence="2">
        <text>RNA(n) + a ribonucleoside 5'-triphosphate = RNA(n+1) + diphosphate</text>
        <dbReference type="Rhea" id="RHEA:21248"/>
        <dbReference type="Rhea" id="RHEA-COMP:14527"/>
        <dbReference type="Rhea" id="RHEA-COMP:17342"/>
        <dbReference type="ChEBI" id="CHEBI:33019"/>
        <dbReference type="ChEBI" id="CHEBI:61557"/>
        <dbReference type="ChEBI" id="CHEBI:140395"/>
        <dbReference type="EC" id="2.7.7.48"/>
    </reaction>
</comment>
<comment type="subunit">
    <text evidence="1">Influenza RNA polymerase is composed of three subunits: PB1, PB2 and PA. Interacts (via N-terminus) with PA (via C-terminus). Interacts (via C-terminus) with PB2 (via N-terminus); this interaction is essential for transcription initiation. Interacts (via C-terminus) with human PKP2 (via N-terminus); the interaction competitively inhibits the interaction between the RNA polymerase subunits PB1 and PB2 (By similarity).</text>
</comment>
<comment type="subcellular location">
    <subcellularLocation>
        <location evidence="1">Host nucleus</location>
    </subcellularLocation>
    <subcellularLocation>
        <location evidence="1">Host cytoplasm</location>
    </subcellularLocation>
</comment>
<comment type="PTM">
    <text evidence="1">Phosphorylated by host PRKCA.</text>
</comment>
<comment type="similarity">
    <text evidence="3">Belongs to the influenza viruses polymerase PB1 family.</text>
</comment>
<proteinExistence type="evidence at protein level"/>
<evidence type="ECO:0000250" key="1">
    <source>
        <dbReference type="UniProtKB" id="P03431"/>
    </source>
</evidence>
<evidence type="ECO:0000255" key="2">
    <source>
        <dbReference type="PROSITE-ProRule" id="PRU00539"/>
    </source>
</evidence>
<evidence type="ECO:0000305" key="3"/>
<protein>
    <recommendedName>
        <fullName>RNA-directed RNA polymerase catalytic subunit</fullName>
        <ecNumber>2.7.7.48</ecNumber>
    </recommendedName>
    <alternativeName>
        <fullName>Polymerase basic protein 1</fullName>
        <shortName>PB1</shortName>
    </alternativeName>
    <alternativeName>
        <fullName>RNA-directed RNA polymerase subunit P1</fullName>
    </alternativeName>
</protein>